<reference key="1">
    <citation type="journal article" date="2007" name="Nat. Genet.">
        <title>Genomic analysis of Bartonella identifies type IV secretion systems as host adaptability factors.</title>
        <authorList>
            <person name="Saenz H.L."/>
            <person name="Engel P."/>
            <person name="Stoeckli M.C."/>
            <person name="Lanz C."/>
            <person name="Raddatz G."/>
            <person name="Vayssier-Taussat M."/>
            <person name="Birtles R."/>
            <person name="Schuster S.C."/>
            <person name="Dehio C."/>
        </authorList>
    </citation>
    <scope>NUCLEOTIDE SEQUENCE [LARGE SCALE GENOMIC DNA]</scope>
    <source>
        <strain>CIP 105476 / IBS 506</strain>
    </source>
</reference>
<organism>
    <name type="scientific">Bartonella tribocorum (strain CIP 105476 / IBS 506)</name>
    <dbReference type="NCBI Taxonomy" id="382640"/>
    <lineage>
        <taxon>Bacteria</taxon>
        <taxon>Pseudomonadati</taxon>
        <taxon>Pseudomonadota</taxon>
        <taxon>Alphaproteobacteria</taxon>
        <taxon>Hyphomicrobiales</taxon>
        <taxon>Bartonellaceae</taxon>
        <taxon>Bartonella</taxon>
    </lineage>
</organism>
<dbReference type="EMBL" id="AM260525">
    <property type="protein sequence ID" value="CAK02150.1"/>
    <property type="molecule type" value="Genomic_DNA"/>
</dbReference>
<dbReference type="SMR" id="A9IXC8"/>
<dbReference type="KEGG" id="btr:BT_1882"/>
<dbReference type="eggNOG" id="COG0792">
    <property type="taxonomic scope" value="Bacteria"/>
</dbReference>
<dbReference type="HOGENOM" id="CLU_115353_0_2_5"/>
<dbReference type="Proteomes" id="UP000001592">
    <property type="component" value="Chromosome"/>
</dbReference>
<dbReference type="GO" id="GO:0003676">
    <property type="term" value="F:nucleic acid binding"/>
    <property type="evidence" value="ECO:0007669"/>
    <property type="project" value="InterPro"/>
</dbReference>
<dbReference type="Gene3D" id="3.40.1350.10">
    <property type="match status" value="1"/>
</dbReference>
<dbReference type="HAMAP" id="MF_00048">
    <property type="entry name" value="UPF0102"/>
    <property type="match status" value="1"/>
</dbReference>
<dbReference type="InterPro" id="IPR011335">
    <property type="entry name" value="Restrct_endonuc-II-like"/>
</dbReference>
<dbReference type="InterPro" id="IPR011856">
    <property type="entry name" value="tRNA_endonuc-like_dom_sf"/>
</dbReference>
<dbReference type="InterPro" id="IPR003509">
    <property type="entry name" value="UPF0102_YraN-like"/>
</dbReference>
<dbReference type="NCBIfam" id="NF009151">
    <property type="entry name" value="PRK12497.1-5"/>
    <property type="match status" value="1"/>
</dbReference>
<dbReference type="PANTHER" id="PTHR34039">
    <property type="entry name" value="UPF0102 PROTEIN YRAN"/>
    <property type="match status" value="1"/>
</dbReference>
<dbReference type="PANTHER" id="PTHR34039:SF1">
    <property type="entry name" value="UPF0102 PROTEIN YRAN"/>
    <property type="match status" value="1"/>
</dbReference>
<dbReference type="Pfam" id="PF02021">
    <property type="entry name" value="UPF0102"/>
    <property type="match status" value="1"/>
</dbReference>
<dbReference type="SUPFAM" id="SSF52980">
    <property type="entry name" value="Restriction endonuclease-like"/>
    <property type="match status" value="1"/>
</dbReference>
<sequence>MCKIMHKTIPKKQRQKSFYRGVRAEKLAAWWLRFKGFHIAEMRFKTKCGEIDLIARRGNLVLIVEVKARSTLLEAMEAVSRMNEKRIEAAADIWLARQKDYALLSVRFDLIAILPWRWPKHIPAFFTSDR</sequence>
<accession>A9IXC8</accession>
<protein>
    <recommendedName>
        <fullName evidence="1">UPF0102 protein BT_1882</fullName>
    </recommendedName>
</protein>
<comment type="similarity">
    <text evidence="1">Belongs to the UPF0102 family.</text>
</comment>
<proteinExistence type="inferred from homology"/>
<gene>
    <name type="ordered locus">BT_1882</name>
</gene>
<feature type="chain" id="PRO_0000336129" description="UPF0102 protein BT_1882">
    <location>
        <begin position="1"/>
        <end position="130"/>
    </location>
</feature>
<name>Y1882_BART1</name>
<evidence type="ECO:0000255" key="1">
    <source>
        <dbReference type="HAMAP-Rule" id="MF_00048"/>
    </source>
</evidence>